<organism>
    <name type="scientific">Limosilactobacillus reuteri subsp. reuteri (strain JCM 1112)</name>
    <name type="common">Lactobacillus reuteri</name>
    <dbReference type="NCBI Taxonomy" id="557433"/>
    <lineage>
        <taxon>Bacteria</taxon>
        <taxon>Bacillati</taxon>
        <taxon>Bacillota</taxon>
        <taxon>Bacilli</taxon>
        <taxon>Lactobacillales</taxon>
        <taxon>Lactobacillaceae</taxon>
        <taxon>Limosilactobacillus</taxon>
    </lineage>
</organism>
<evidence type="ECO:0000255" key="1">
    <source>
        <dbReference type="HAMAP-Rule" id="MF_00503"/>
    </source>
</evidence>
<evidence type="ECO:0000305" key="2"/>
<accession>B2G4Z5</accession>
<sequence>MKVIFTQDVRGRGQRGQIKEVPDGYAQNYLIKRGLAKQATKAAMSQLKGQQRAEEKHAAEELADAKRMKKILEDDNTVVELSGKAGTDGRMFGSISTKQIATALQKQFDLKIDKRKIELAAPIKALGYVNVPIKLHPEVEAQIRVHIAEK</sequence>
<reference key="1">
    <citation type="journal article" date="2008" name="DNA Res.">
        <title>Comparative genome analysis of Lactobacillus reuteri and Lactobacillus fermentum reveal a genomic island for reuterin and cobalamin production.</title>
        <authorList>
            <person name="Morita H."/>
            <person name="Toh H."/>
            <person name="Fukuda S."/>
            <person name="Horikawa H."/>
            <person name="Oshima K."/>
            <person name="Suzuki T."/>
            <person name="Murakami M."/>
            <person name="Hisamatsu S."/>
            <person name="Kato Y."/>
            <person name="Takizawa T."/>
            <person name="Fukuoka H."/>
            <person name="Yoshimura T."/>
            <person name="Itoh K."/>
            <person name="O'Sullivan D.J."/>
            <person name="McKay L.L."/>
            <person name="Ohno H."/>
            <person name="Kikuchi J."/>
            <person name="Masaoka T."/>
            <person name="Hattori M."/>
        </authorList>
    </citation>
    <scope>NUCLEOTIDE SEQUENCE [LARGE SCALE GENOMIC DNA]</scope>
    <source>
        <strain>JCM 1112</strain>
    </source>
</reference>
<dbReference type="EMBL" id="AP007281">
    <property type="protein sequence ID" value="BAG24527.1"/>
    <property type="molecule type" value="Genomic_DNA"/>
</dbReference>
<dbReference type="RefSeq" id="WP_003665243.1">
    <property type="nucleotide sequence ID" value="NC_010609.1"/>
</dbReference>
<dbReference type="SMR" id="B2G4Z5"/>
<dbReference type="GeneID" id="77191346"/>
<dbReference type="KEGG" id="lrf:LAR_0011"/>
<dbReference type="HOGENOM" id="CLU_078938_3_2_9"/>
<dbReference type="GO" id="GO:1990904">
    <property type="term" value="C:ribonucleoprotein complex"/>
    <property type="evidence" value="ECO:0007669"/>
    <property type="project" value="UniProtKB-KW"/>
</dbReference>
<dbReference type="GO" id="GO:0005840">
    <property type="term" value="C:ribosome"/>
    <property type="evidence" value="ECO:0007669"/>
    <property type="project" value="UniProtKB-KW"/>
</dbReference>
<dbReference type="GO" id="GO:0019843">
    <property type="term" value="F:rRNA binding"/>
    <property type="evidence" value="ECO:0007669"/>
    <property type="project" value="UniProtKB-UniRule"/>
</dbReference>
<dbReference type="GO" id="GO:0003735">
    <property type="term" value="F:structural constituent of ribosome"/>
    <property type="evidence" value="ECO:0007669"/>
    <property type="project" value="InterPro"/>
</dbReference>
<dbReference type="GO" id="GO:0006412">
    <property type="term" value="P:translation"/>
    <property type="evidence" value="ECO:0007669"/>
    <property type="project" value="UniProtKB-UniRule"/>
</dbReference>
<dbReference type="FunFam" id="3.10.430.100:FF:000002">
    <property type="entry name" value="50S ribosomal protein L9"/>
    <property type="match status" value="1"/>
</dbReference>
<dbReference type="FunFam" id="3.40.5.10:FF:000002">
    <property type="entry name" value="50S ribosomal protein L9"/>
    <property type="match status" value="1"/>
</dbReference>
<dbReference type="Gene3D" id="3.10.430.100">
    <property type="entry name" value="Ribosomal protein L9, C-terminal domain"/>
    <property type="match status" value="1"/>
</dbReference>
<dbReference type="Gene3D" id="3.40.5.10">
    <property type="entry name" value="Ribosomal protein L9, N-terminal domain"/>
    <property type="match status" value="1"/>
</dbReference>
<dbReference type="HAMAP" id="MF_00503">
    <property type="entry name" value="Ribosomal_bL9"/>
    <property type="match status" value="1"/>
</dbReference>
<dbReference type="InterPro" id="IPR000244">
    <property type="entry name" value="Ribosomal_bL9"/>
</dbReference>
<dbReference type="InterPro" id="IPR009027">
    <property type="entry name" value="Ribosomal_bL9/RNase_H1_N"/>
</dbReference>
<dbReference type="InterPro" id="IPR020594">
    <property type="entry name" value="Ribosomal_bL9_bac/chp"/>
</dbReference>
<dbReference type="InterPro" id="IPR020069">
    <property type="entry name" value="Ribosomal_bL9_C"/>
</dbReference>
<dbReference type="InterPro" id="IPR036791">
    <property type="entry name" value="Ribosomal_bL9_C_sf"/>
</dbReference>
<dbReference type="InterPro" id="IPR020070">
    <property type="entry name" value="Ribosomal_bL9_N"/>
</dbReference>
<dbReference type="InterPro" id="IPR036935">
    <property type="entry name" value="Ribosomal_bL9_N_sf"/>
</dbReference>
<dbReference type="NCBIfam" id="TIGR00158">
    <property type="entry name" value="L9"/>
    <property type="match status" value="1"/>
</dbReference>
<dbReference type="PANTHER" id="PTHR21368">
    <property type="entry name" value="50S RIBOSOMAL PROTEIN L9"/>
    <property type="match status" value="1"/>
</dbReference>
<dbReference type="Pfam" id="PF03948">
    <property type="entry name" value="Ribosomal_L9_C"/>
    <property type="match status" value="1"/>
</dbReference>
<dbReference type="Pfam" id="PF01281">
    <property type="entry name" value="Ribosomal_L9_N"/>
    <property type="match status" value="1"/>
</dbReference>
<dbReference type="SUPFAM" id="SSF55658">
    <property type="entry name" value="L9 N-domain-like"/>
    <property type="match status" value="1"/>
</dbReference>
<dbReference type="SUPFAM" id="SSF55653">
    <property type="entry name" value="Ribosomal protein L9 C-domain"/>
    <property type="match status" value="1"/>
</dbReference>
<dbReference type="PROSITE" id="PS00651">
    <property type="entry name" value="RIBOSOMAL_L9"/>
    <property type="match status" value="1"/>
</dbReference>
<keyword id="KW-0687">Ribonucleoprotein</keyword>
<keyword id="KW-0689">Ribosomal protein</keyword>
<keyword id="KW-0694">RNA-binding</keyword>
<keyword id="KW-0699">rRNA-binding</keyword>
<protein>
    <recommendedName>
        <fullName evidence="1">Large ribosomal subunit protein bL9</fullName>
    </recommendedName>
    <alternativeName>
        <fullName evidence="2">50S ribosomal protein L9</fullName>
    </alternativeName>
</protein>
<comment type="function">
    <text evidence="1">Binds to the 23S rRNA.</text>
</comment>
<comment type="similarity">
    <text evidence="1">Belongs to the bacterial ribosomal protein bL9 family.</text>
</comment>
<gene>
    <name evidence="1" type="primary">rplI</name>
    <name type="ordered locus">LAR_0011</name>
</gene>
<feature type="chain" id="PRO_1000126931" description="Large ribosomal subunit protein bL9">
    <location>
        <begin position="1"/>
        <end position="150"/>
    </location>
</feature>
<name>RL9_LIMRJ</name>
<proteinExistence type="inferred from homology"/>